<sequence length="176" mass="20709">MDFKQYSPEELKECSMIEVVHSVLGDKRQATTFNELVQEIAQVLGLSQEQVNAKIAQFYTDLNIDGRFINLGENRWGLRSWYPYEQIDEEILPQPKPKKKRKVEDDGFDDYIEEDEDFDDADVTEDEDDDVEDLDKVLEDEDGDDDDLDDLDEDDDDFAEEELEYDETEEEEEEEL</sequence>
<accession>Q6HAU4</accession>
<comment type="function">
    <text evidence="1">Participates in both the initiation and recycling phases of transcription. In the presence of the delta subunit, RNAP displays an increased specificity of transcription, a decreased affinity for nucleic acids, and an increased efficiency of RNA synthesis because of enhanced recycling.</text>
</comment>
<comment type="subunit">
    <text evidence="1">RNAP is composed of a core of 2 alpha, a beta and a beta' subunits. The core is associated with a delta subunit and one of several sigma factors.</text>
</comment>
<comment type="similarity">
    <text evidence="1">Belongs to the RpoE family.</text>
</comment>
<feature type="chain" id="PRO_0000303124" description="Probable DNA-directed RNA polymerase subunit delta">
    <location>
        <begin position="1"/>
        <end position="176"/>
    </location>
</feature>
<feature type="domain" description="HTH HARE-type" evidence="2">
    <location>
        <begin position="14"/>
        <end position="81"/>
    </location>
</feature>
<feature type="region of interest" description="Disordered" evidence="3">
    <location>
        <begin position="90"/>
        <end position="176"/>
    </location>
</feature>
<feature type="compositionally biased region" description="Acidic residues" evidence="3">
    <location>
        <begin position="106"/>
        <end position="176"/>
    </location>
</feature>
<gene>
    <name evidence="1" type="primary">rpoE</name>
    <name type="ordered locus">BT9727_5023</name>
</gene>
<dbReference type="EMBL" id="AE017355">
    <property type="protein sequence ID" value="AAT62622.1"/>
    <property type="molecule type" value="Genomic_DNA"/>
</dbReference>
<dbReference type="RefSeq" id="WP_000346286.1">
    <property type="nucleotide sequence ID" value="NC_005957.1"/>
</dbReference>
<dbReference type="RefSeq" id="YP_039332.1">
    <property type="nucleotide sequence ID" value="NC_005957.1"/>
</dbReference>
<dbReference type="SMR" id="Q6HAU4"/>
<dbReference type="KEGG" id="btk:BT9727_5023"/>
<dbReference type="PATRIC" id="fig|281309.8.peg.5343"/>
<dbReference type="HOGENOM" id="CLU_116648_1_0_9"/>
<dbReference type="Proteomes" id="UP000001301">
    <property type="component" value="Chromosome"/>
</dbReference>
<dbReference type="GO" id="GO:0000428">
    <property type="term" value="C:DNA-directed RNA polymerase complex"/>
    <property type="evidence" value="ECO:0007669"/>
    <property type="project" value="UniProtKB-KW"/>
</dbReference>
<dbReference type="GO" id="GO:0003899">
    <property type="term" value="F:DNA-directed RNA polymerase activity"/>
    <property type="evidence" value="ECO:0007669"/>
    <property type="project" value="UniProtKB-UniRule"/>
</dbReference>
<dbReference type="GO" id="GO:0006351">
    <property type="term" value="P:DNA-templated transcription"/>
    <property type="evidence" value="ECO:0007669"/>
    <property type="project" value="InterPro"/>
</dbReference>
<dbReference type="GO" id="GO:0006355">
    <property type="term" value="P:regulation of DNA-templated transcription"/>
    <property type="evidence" value="ECO:0007669"/>
    <property type="project" value="UniProtKB-UniRule"/>
</dbReference>
<dbReference type="FunFam" id="1.10.10.1250:FF:000001">
    <property type="entry name" value="Probable DNA-directed RNA polymerase subunit delta"/>
    <property type="match status" value="1"/>
</dbReference>
<dbReference type="Gene3D" id="1.10.10.1250">
    <property type="entry name" value="RNA polymerase, subunit delta, N-terminal domain"/>
    <property type="match status" value="1"/>
</dbReference>
<dbReference type="HAMAP" id="MF_00357">
    <property type="entry name" value="RNApol_bact_RpoE"/>
    <property type="match status" value="1"/>
</dbReference>
<dbReference type="InterPro" id="IPR007759">
    <property type="entry name" value="Asxl_HARE-HTH"/>
</dbReference>
<dbReference type="InterPro" id="IPR038087">
    <property type="entry name" value="RNAP_delta_N_dom_sf"/>
</dbReference>
<dbReference type="InterPro" id="IPR029757">
    <property type="entry name" value="RpoE"/>
</dbReference>
<dbReference type="NCBIfam" id="TIGR04567">
    <property type="entry name" value="RNAP_delt_lowGC"/>
    <property type="match status" value="1"/>
</dbReference>
<dbReference type="Pfam" id="PF05066">
    <property type="entry name" value="HARE-HTH"/>
    <property type="match status" value="1"/>
</dbReference>
<dbReference type="PROSITE" id="PS51913">
    <property type="entry name" value="HTH_HARE"/>
    <property type="match status" value="1"/>
</dbReference>
<reference key="1">
    <citation type="journal article" date="2006" name="J. Bacteriol.">
        <title>Pathogenomic sequence analysis of Bacillus cereus and Bacillus thuringiensis isolates closely related to Bacillus anthracis.</title>
        <authorList>
            <person name="Han C.S."/>
            <person name="Xie G."/>
            <person name="Challacombe J.F."/>
            <person name="Altherr M.R."/>
            <person name="Bhotika S.S."/>
            <person name="Bruce D."/>
            <person name="Campbell C.S."/>
            <person name="Campbell M.L."/>
            <person name="Chen J."/>
            <person name="Chertkov O."/>
            <person name="Cleland C."/>
            <person name="Dimitrijevic M."/>
            <person name="Doggett N.A."/>
            <person name="Fawcett J.J."/>
            <person name="Glavina T."/>
            <person name="Goodwin L.A."/>
            <person name="Hill K.K."/>
            <person name="Hitchcock P."/>
            <person name="Jackson P.J."/>
            <person name="Keim P."/>
            <person name="Kewalramani A.R."/>
            <person name="Longmire J."/>
            <person name="Lucas S."/>
            <person name="Malfatti S."/>
            <person name="McMurry K."/>
            <person name="Meincke L.J."/>
            <person name="Misra M."/>
            <person name="Moseman B.L."/>
            <person name="Mundt M."/>
            <person name="Munk A.C."/>
            <person name="Okinaka R.T."/>
            <person name="Parson-Quintana B."/>
            <person name="Reilly L.P."/>
            <person name="Richardson P."/>
            <person name="Robinson D.L."/>
            <person name="Rubin E."/>
            <person name="Saunders E."/>
            <person name="Tapia R."/>
            <person name="Tesmer J.G."/>
            <person name="Thayer N."/>
            <person name="Thompson L.S."/>
            <person name="Tice H."/>
            <person name="Ticknor L.O."/>
            <person name="Wills P.L."/>
            <person name="Brettin T.S."/>
            <person name="Gilna P."/>
        </authorList>
    </citation>
    <scope>NUCLEOTIDE SEQUENCE [LARGE SCALE GENOMIC DNA]</scope>
    <source>
        <strain>97-27</strain>
    </source>
</reference>
<organism>
    <name type="scientific">Bacillus thuringiensis subsp. konkukian (strain 97-27)</name>
    <dbReference type="NCBI Taxonomy" id="281309"/>
    <lineage>
        <taxon>Bacteria</taxon>
        <taxon>Bacillati</taxon>
        <taxon>Bacillota</taxon>
        <taxon>Bacilli</taxon>
        <taxon>Bacillales</taxon>
        <taxon>Bacillaceae</taxon>
        <taxon>Bacillus</taxon>
        <taxon>Bacillus cereus group</taxon>
    </lineage>
</organism>
<name>RPOE_BACHK</name>
<keyword id="KW-0240">DNA-directed RNA polymerase</keyword>
<keyword id="KW-0548">Nucleotidyltransferase</keyword>
<keyword id="KW-0804">Transcription</keyword>
<keyword id="KW-0808">Transferase</keyword>
<evidence type="ECO:0000255" key="1">
    <source>
        <dbReference type="HAMAP-Rule" id="MF_00357"/>
    </source>
</evidence>
<evidence type="ECO:0000255" key="2">
    <source>
        <dbReference type="PROSITE-ProRule" id="PRU01261"/>
    </source>
</evidence>
<evidence type="ECO:0000256" key="3">
    <source>
        <dbReference type="SAM" id="MobiDB-lite"/>
    </source>
</evidence>
<proteinExistence type="inferred from homology"/>
<protein>
    <recommendedName>
        <fullName evidence="1">Probable DNA-directed RNA polymerase subunit delta</fullName>
    </recommendedName>
    <alternativeName>
        <fullName evidence="1">RNAP delta factor</fullName>
    </alternativeName>
</protein>